<organism>
    <name type="scientific">Dictyostelium discoideum</name>
    <name type="common">Social amoeba</name>
    <dbReference type="NCBI Taxonomy" id="44689"/>
    <lineage>
        <taxon>Eukaryota</taxon>
        <taxon>Amoebozoa</taxon>
        <taxon>Evosea</taxon>
        <taxon>Eumycetozoa</taxon>
        <taxon>Dictyostelia</taxon>
        <taxon>Dictyosteliales</taxon>
        <taxon>Dictyosteliaceae</taxon>
        <taxon>Dictyostelium</taxon>
    </lineage>
</organism>
<accession>Q559R1</accession>
<proteinExistence type="predicted"/>
<dbReference type="EMBL" id="AAFI02000008">
    <property type="protein sequence ID" value="EAL71380.1"/>
    <property type="molecule type" value="Genomic_DNA"/>
</dbReference>
<dbReference type="RefSeq" id="XP_645273.1">
    <property type="nucleotide sequence ID" value="XM_640181.1"/>
</dbReference>
<dbReference type="FunCoup" id="Q559R1">
    <property type="interactions" value="57"/>
</dbReference>
<dbReference type="STRING" id="44689.Q559R1"/>
<dbReference type="GlyGen" id="Q559R1">
    <property type="glycosylation" value="2 sites"/>
</dbReference>
<dbReference type="PaxDb" id="44689-DDB0233129"/>
<dbReference type="EnsemblProtists" id="EAL71380">
    <property type="protein sequence ID" value="EAL71380"/>
    <property type="gene ID" value="DDB_G0272456"/>
</dbReference>
<dbReference type="GeneID" id="8618439"/>
<dbReference type="KEGG" id="ddi:DDB_G0272456"/>
<dbReference type="dictyBase" id="DDB_G0272456"/>
<dbReference type="VEuPathDB" id="AmoebaDB:DDB_G0272456"/>
<dbReference type="eggNOG" id="KOG4535">
    <property type="taxonomic scope" value="Eukaryota"/>
</dbReference>
<dbReference type="HOGENOM" id="CLU_247735_0_0_1"/>
<dbReference type="InParanoid" id="Q559R1"/>
<dbReference type="OMA" id="INSNFDR"/>
<dbReference type="PRO" id="PR:Q559R1"/>
<dbReference type="Proteomes" id="UP000002195">
    <property type="component" value="Chromosome 2"/>
</dbReference>
<dbReference type="Gene3D" id="1.25.10.10">
    <property type="entry name" value="Leucine-rich Repeat Variant"/>
    <property type="match status" value="3"/>
</dbReference>
<dbReference type="InterPro" id="IPR011989">
    <property type="entry name" value="ARM-like"/>
</dbReference>
<dbReference type="InterPro" id="IPR016024">
    <property type="entry name" value="ARM-type_fold"/>
</dbReference>
<dbReference type="InterPro" id="IPR025283">
    <property type="entry name" value="DUF4042"/>
</dbReference>
<dbReference type="InterPro" id="IPR052107">
    <property type="entry name" value="HEAT6"/>
</dbReference>
<dbReference type="PANTHER" id="PTHR13366:SF0">
    <property type="entry name" value="HEAT REPEAT-CONTAINING PROTEIN 6"/>
    <property type="match status" value="1"/>
</dbReference>
<dbReference type="PANTHER" id="PTHR13366">
    <property type="entry name" value="MALARIA ANTIGEN-RELATED"/>
    <property type="match status" value="1"/>
</dbReference>
<dbReference type="Pfam" id="PF13251">
    <property type="entry name" value="DUF4042"/>
    <property type="match status" value="2"/>
</dbReference>
<dbReference type="SUPFAM" id="SSF48371">
    <property type="entry name" value="ARM repeat"/>
    <property type="match status" value="2"/>
</dbReference>
<dbReference type="SUPFAM" id="SSF81995">
    <property type="entry name" value="beta-sandwich domain of Sec23/24"/>
    <property type="match status" value="1"/>
</dbReference>
<evidence type="ECO:0000255" key="1"/>
<evidence type="ECO:0000256" key="2">
    <source>
        <dbReference type="SAM" id="MobiDB-lite"/>
    </source>
</evidence>
<keyword id="KW-0175">Coiled coil</keyword>
<keyword id="KW-1185">Reference proteome</keyword>
<gene>
    <name type="ORF">DDB_G0272456</name>
</gene>
<name>Y2456_DICDI</name>
<reference key="1">
    <citation type="journal article" date="2002" name="Nature">
        <title>Sequence and analysis of chromosome 2 of Dictyostelium discoideum.</title>
        <authorList>
            <person name="Gloeckner G."/>
            <person name="Eichinger L."/>
            <person name="Szafranski K."/>
            <person name="Pachebat J.A."/>
            <person name="Bankier A.T."/>
            <person name="Dear P.H."/>
            <person name="Lehmann R."/>
            <person name="Baumgart C."/>
            <person name="Parra G."/>
            <person name="Abril J.F."/>
            <person name="Guigo R."/>
            <person name="Kumpf K."/>
            <person name="Tunggal B."/>
            <person name="Cox E.C."/>
            <person name="Quail M.A."/>
            <person name="Platzer M."/>
            <person name="Rosenthal A."/>
            <person name="Noegel A.A."/>
        </authorList>
    </citation>
    <scope>NUCLEOTIDE SEQUENCE [LARGE SCALE GENOMIC DNA]</scope>
    <source>
        <strain>AX4</strain>
    </source>
</reference>
<reference key="2">
    <citation type="journal article" date="2005" name="Nature">
        <title>The genome of the social amoeba Dictyostelium discoideum.</title>
        <authorList>
            <person name="Eichinger L."/>
            <person name="Pachebat J.A."/>
            <person name="Gloeckner G."/>
            <person name="Rajandream M.A."/>
            <person name="Sucgang R."/>
            <person name="Berriman M."/>
            <person name="Song J."/>
            <person name="Olsen R."/>
            <person name="Szafranski K."/>
            <person name="Xu Q."/>
            <person name="Tunggal B."/>
            <person name="Kummerfeld S."/>
            <person name="Madera M."/>
            <person name="Konfortov B.A."/>
            <person name="Rivero F."/>
            <person name="Bankier A.T."/>
            <person name="Lehmann R."/>
            <person name="Hamlin N."/>
            <person name="Davies R."/>
            <person name="Gaudet P."/>
            <person name="Fey P."/>
            <person name="Pilcher K."/>
            <person name="Chen G."/>
            <person name="Saunders D."/>
            <person name="Sodergren E.J."/>
            <person name="Davis P."/>
            <person name="Kerhornou A."/>
            <person name="Nie X."/>
            <person name="Hall N."/>
            <person name="Anjard C."/>
            <person name="Hemphill L."/>
            <person name="Bason N."/>
            <person name="Farbrother P."/>
            <person name="Desany B."/>
            <person name="Just E."/>
            <person name="Morio T."/>
            <person name="Rost R."/>
            <person name="Churcher C.M."/>
            <person name="Cooper J."/>
            <person name="Haydock S."/>
            <person name="van Driessche N."/>
            <person name="Cronin A."/>
            <person name="Goodhead I."/>
            <person name="Muzny D.M."/>
            <person name="Mourier T."/>
            <person name="Pain A."/>
            <person name="Lu M."/>
            <person name="Harper D."/>
            <person name="Lindsay R."/>
            <person name="Hauser H."/>
            <person name="James K.D."/>
            <person name="Quiles M."/>
            <person name="Madan Babu M."/>
            <person name="Saito T."/>
            <person name="Buchrieser C."/>
            <person name="Wardroper A."/>
            <person name="Felder M."/>
            <person name="Thangavelu M."/>
            <person name="Johnson D."/>
            <person name="Knights A."/>
            <person name="Loulseged H."/>
            <person name="Mungall K.L."/>
            <person name="Oliver K."/>
            <person name="Price C."/>
            <person name="Quail M.A."/>
            <person name="Urushihara H."/>
            <person name="Hernandez J."/>
            <person name="Rabbinowitsch E."/>
            <person name="Steffen D."/>
            <person name="Sanders M."/>
            <person name="Ma J."/>
            <person name="Kohara Y."/>
            <person name="Sharp S."/>
            <person name="Simmonds M.N."/>
            <person name="Spiegler S."/>
            <person name="Tivey A."/>
            <person name="Sugano S."/>
            <person name="White B."/>
            <person name="Walker D."/>
            <person name="Woodward J.R."/>
            <person name="Winckler T."/>
            <person name="Tanaka Y."/>
            <person name="Shaulsky G."/>
            <person name="Schleicher M."/>
            <person name="Weinstock G.M."/>
            <person name="Rosenthal A."/>
            <person name="Cox E.C."/>
            <person name="Chisholm R.L."/>
            <person name="Gibbs R.A."/>
            <person name="Loomis W.F."/>
            <person name="Platzer M."/>
            <person name="Kay R.R."/>
            <person name="Williams J.G."/>
            <person name="Dear P.H."/>
            <person name="Noegel A.A."/>
            <person name="Barrell B.G."/>
            <person name="Kuspa A."/>
        </authorList>
    </citation>
    <scope>NUCLEOTIDE SEQUENCE [LARGE SCALE GENOMIC DNA]</scope>
    <source>
        <strain>AX4</strain>
    </source>
</reference>
<sequence>MENNNGNSVINKSNDKNSNNPNYMLLDRIFRLQKHNLSILLSNNNNNNNNNNNNNSNITIQSATNYLNELLNCLNELLTKFQSKTFQSPPQPINTSSTQTNYNNQNNPNPNPNPSPNPNSNNNNNNNTHITIILSTEIIIKILVKFCSVLPMDINYHKISVYGSPINLSLIQLPLKLAQLIVLISRYQNSITFNDHPNELEQLVNYFLYIIKPEKQIASSPSTPSTPSSSSRSQQQQQQQQQQSSSSSLSSSSSFHNVNTNLRIESLKALSSLLHNNGPNITSKLQQPLIECLIELSNYSDQSIDQETKRIAIVSLGNLCMQCGTKLSKYYIQIYDRLSLNLERVTSHINSDKYLIKFTSSILRSMQLLITQAKGILDQKSKSLYNILKTLMFYGVNISSSMSSVLTYQYQFEYSSRKKKQLQQQLANNNVLNSNSNSSSGGASSSSGGSNNTSPAIVTSASIHNSNGNSNENEIEKSTGITSSDSDIDERYNLSKLRFLTITLLNTMAKHSPKVFFGYWTLFLPSTPFPLTPTVFTSMTNDPDIKIKIVAANFLQTIIDGSKDYLVAINTSNHHNHHHSHSKSITTASPIMSRLNLNDNNNNNINNLNSNSFTTFSQNLTSILKEIHNGLIMILVQDPNYILPAFHQQILRCVSTLIINCPYEKLNMPSLLTSLLSAISPYIQNRDHSIQLTSLICIKQLFDITPLSPKELTPVLNNNNFIKIILNFLNNNNNNNNNNNNNNNNNNNNNNNNNNNNNNNILSNTLTSSLINEPNQQHQHQQHQQQNQQHHHQHQQQSLHFNQIEYVKIECLQIIGALTKHNFTILLEYIDLVYNILISILKKEISIHNSSGIVNSQQQQQQQQQQQQQQQQQQQQQQQQQQQQQQQQQQQQQQHNNTQNINNISGLNESSIGNYCLKTFEEITKAIQDSHKNNNTDIDYKICEKEFWNLFFLILPSLTVDPYPQIRASICNIFSNIGSKQFESMTKNLQMHLVSVVLGLIFDEQHIVRASACRSVGILIKIDSLHDDANFLSNSASCLTKSMGDVNINVRIKACWSLANLCDHLVSLKSKQELLFNDIPRQILSKVLESLLNSSFDNPKIRSNVVRALGNFARFADKKVLYNLNETSTFCKINENNNQNYNNQNISDYFHSIGGFNNLMNGVGGGGGSSSSGGGNGSGTIIPTTEEEEEKEEINIENKQKQSLPPQFSNSITLKKDSIILDRIVDSLLKNAQEPSSSFNFVKVKWNACYALGNIFYNQDIEFPNDDNNNNNNNNNKWLPQVYSTLITLMKSCKNFKTRINATSSLATPTHSRRKYGPFYKDVFEAVLESLSNINTVSDTSEFQYRDNLEKQLEIALIHLISEMKSNEIKSFDNCFFQYTDIIVNSFQKHQIILPIPQQPLPTSKTSSSSSSTSSEATPYLSSSVPPSIVTSTPSTTPMISSSNPNTSSLPTSERPTIKEYQKALEIIKEFCQNHNNIDTMDDTQKLHLSQLCLLFDFSESNYQDMYSKLQEVHSTGKSSH</sequence>
<feature type="chain" id="PRO_0000393698" description="Putative uncharacterized protein DDB_G0272456">
    <location>
        <begin position="1"/>
        <end position="1521"/>
    </location>
</feature>
<feature type="region of interest" description="Disordered" evidence="2">
    <location>
        <begin position="1"/>
        <end position="20"/>
    </location>
</feature>
<feature type="region of interest" description="Disordered" evidence="2">
    <location>
        <begin position="85"/>
        <end position="124"/>
    </location>
</feature>
<feature type="region of interest" description="Disordered" evidence="2">
    <location>
        <begin position="218"/>
        <end position="254"/>
    </location>
</feature>
<feature type="region of interest" description="Disordered" evidence="2">
    <location>
        <begin position="431"/>
        <end position="482"/>
    </location>
</feature>
<feature type="region of interest" description="Disordered" evidence="2">
    <location>
        <begin position="735"/>
        <end position="797"/>
    </location>
</feature>
<feature type="region of interest" description="Disordered" evidence="2">
    <location>
        <begin position="1398"/>
        <end position="1455"/>
    </location>
</feature>
<feature type="coiled-coil region" evidence="1">
    <location>
        <begin position="853"/>
        <end position="903"/>
    </location>
</feature>
<feature type="compositionally biased region" description="Low complexity" evidence="2">
    <location>
        <begin position="94"/>
        <end position="108"/>
    </location>
</feature>
<feature type="compositionally biased region" description="Low complexity" evidence="2">
    <location>
        <begin position="219"/>
        <end position="254"/>
    </location>
</feature>
<feature type="compositionally biased region" description="Low complexity" evidence="2">
    <location>
        <begin position="431"/>
        <end position="454"/>
    </location>
</feature>
<feature type="compositionally biased region" description="Polar residues" evidence="2">
    <location>
        <begin position="455"/>
        <end position="464"/>
    </location>
</feature>
<feature type="compositionally biased region" description="Low complexity" evidence="2">
    <location>
        <begin position="465"/>
        <end position="482"/>
    </location>
</feature>
<feature type="compositionally biased region" description="Low complexity" evidence="2">
    <location>
        <begin position="735"/>
        <end position="762"/>
    </location>
</feature>
<feature type="compositionally biased region" description="Polar residues" evidence="2">
    <location>
        <begin position="763"/>
        <end position="774"/>
    </location>
</feature>
<feature type="compositionally biased region" description="Low complexity" evidence="2">
    <location>
        <begin position="775"/>
        <end position="788"/>
    </location>
</feature>
<feature type="compositionally biased region" description="Low complexity" evidence="2">
    <location>
        <begin position="1398"/>
        <end position="1453"/>
    </location>
</feature>
<protein>
    <recommendedName>
        <fullName>Putative uncharacterized protein DDB_G0272456</fullName>
    </recommendedName>
</protein>